<name>FIS_SALCH</name>
<dbReference type="EMBL" id="AE017220">
    <property type="protein sequence ID" value="AAX67229.1"/>
    <property type="molecule type" value="Genomic_DNA"/>
</dbReference>
<dbReference type="RefSeq" id="WP_000462905.1">
    <property type="nucleotide sequence ID" value="NC_006905.1"/>
</dbReference>
<dbReference type="SMR" id="Q57J83"/>
<dbReference type="GeneID" id="98390389"/>
<dbReference type="KEGG" id="sec:SCH_3323"/>
<dbReference type="HOGENOM" id="CLU_158040_3_0_6"/>
<dbReference type="Proteomes" id="UP000000538">
    <property type="component" value="Chromosome"/>
</dbReference>
<dbReference type="GO" id="GO:0003700">
    <property type="term" value="F:DNA-binding transcription factor activity"/>
    <property type="evidence" value="ECO:0007669"/>
    <property type="project" value="UniProtKB-UniRule"/>
</dbReference>
<dbReference type="GO" id="GO:0043565">
    <property type="term" value="F:sequence-specific DNA binding"/>
    <property type="evidence" value="ECO:0007669"/>
    <property type="project" value="InterPro"/>
</dbReference>
<dbReference type="FunFam" id="1.10.10.60:FF:000006">
    <property type="entry name" value="DNA-binding protein Fis"/>
    <property type="match status" value="1"/>
</dbReference>
<dbReference type="Gene3D" id="1.10.10.60">
    <property type="entry name" value="Homeodomain-like"/>
    <property type="match status" value="1"/>
</dbReference>
<dbReference type="HAMAP" id="MF_00166">
    <property type="entry name" value="DNA_binding_Fis"/>
    <property type="match status" value="1"/>
</dbReference>
<dbReference type="InterPro" id="IPR005412">
    <property type="entry name" value="Fis_DNA-bd"/>
</dbReference>
<dbReference type="InterPro" id="IPR009057">
    <property type="entry name" value="Homeodomain-like_sf"/>
</dbReference>
<dbReference type="InterPro" id="IPR002197">
    <property type="entry name" value="HTH_Fis"/>
</dbReference>
<dbReference type="InterPro" id="IPR050207">
    <property type="entry name" value="Trans_regulatory_Fis"/>
</dbReference>
<dbReference type="NCBIfam" id="NF001659">
    <property type="entry name" value="PRK00430.1"/>
    <property type="match status" value="1"/>
</dbReference>
<dbReference type="PANTHER" id="PTHR47918">
    <property type="entry name" value="DNA-BINDING PROTEIN FIS"/>
    <property type="match status" value="1"/>
</dbReference>
<dbReference type="PANTHER" id="PTHR47918:SF1">
    <property type="entry name" value="DNA-BINDING PROTEIN FIS"/>
    <property type="match status" value="1"/>
</dbReference>
<dbReference type="Pfam" id="PF02954">
    <property type="entry name" value="HTH_8"/>
    <property type="match status" value="1"/>
</dbReference>
<dbReference type="PIRSF" id="PIRSF002097">
    <property type="entry name" value="DNA-binding_Fis"/>
    <property type="match status" value="1"/>
</dbReference>
<dbReference type="PRINTS" id="PR01591">
    <property type="entry name" value="DNABINDNGFIS"/>
</dbReference>
<dbReference type="PRINTS" id="PR01590">
    <property type="entry name" value="HTHFIS"/>
</dbReference>
<dbReference type="SUPFAM" id="SSF46689">
    <property type="entry name" value="Homeodomain-like"/>
    <property type="match status" value="1"/>
</dbReference>
<keyword id="KW-0010">Activator</keyword>
<keyword id="KW-0238">DNA-binding</keyword>
<keyword id="KW-0804">Transcription</keyword>
<keyword id="KW-0805">Transcription regulation</keyword>
<reference key="1">
    <citation type="journal article" date="2005" name="Nucleic Acids Res.">
        <title>The genome sequence of Salmonella enterica serovar Choleraesuis, a highly invasive and resistant zoonotic pathogen.</title>
        <authorList>
            <person name="Chiu C.-H."/>
            <person name="Tang P."/>
            <person name="Chu C."/>
            <person name="Hu S."/>
            <person name="Bao Q."/>
            <person name="Yu J."/>
            <person name="Chou Y.-Y."/>
            <person name="Wang H.-S."/>
            <person name="Lee Y.-S."/>
        </authorList>
    </citation>
    <scope>NUCLEOTIDE SEQUENCE [LARGE SCALE GENOMIC DNA]</scope>
    <source>
        <strain>SC-B67</strain>
    </source>
</reference>
<gene>
    <name evidence="1" type="primary">fis</name>
    <name type="ordered locus">SCH_3323</name>
</gene>
<feature type="chain" id="PRO_1000023333" description="DNA-binding protein Fis">
    <location>
        <begin position="1"/>
        <end position="98"/>
    </location>
</feature>
<feature type="DNA-binding region" description="H-T-H motif" evidence="1">
    <location>
        <begin position="74"/>
        <end position="93"/>
    </location>
</feature>
<evidence type="ECO:0000255" key="1">
    <source>
        <dbReference type="HAMAP-Rule" id="MF_00166"/>
    </source>
</evidence>
<accession>Q57J83</accession>
<protein>
    <recommendedName>
        <fullName evidence="1">DNA-binding protein Fis</fullName>
    </recommendedName>
</protein>
<proteinExistence type="inferred from homology"/>
<sequence>MFEQRVNSDVLTVSTVNSQDQVTQKPLRDSVKQALKNYFAQLNGQDVNDLYELVLAEVEQPLLDMVMQYTRGNQTRAALMMGINRGTLRKKLKKYGMN</sequence>
<organism>
    <name type="scientific">Salmonella choleraesuis (strain SC-B67)</name>
    <dbReference type="NCBI Taxonomy" id="321314"/>
    <lineage>
        <taxon>Bacteria</taxon>
        <taxon>Pseudomonadati</taxon>
        <taxon>Pseudomonadota</taxon>
        <taxon>Gammaproteobacteria</taxon>
        <taxon>Enterobacterales</taxon>
        <taxon>Enterobacteriaceae</taxon>
        <taxon>Salmonella</taxon>
    </lineage>
</organism>
<comment type="function">
    <text evidence="1">Activates ribosomal RNA transcription. Plays a direct role in upstream activation of rRNA promoters.</text>
</comment>
<comment type="subunit">
    <text evidence="1">Homodimer.</text>
</comment>
<comment type="similarity">
    <text evidence="1">Belongs to the transcriptional regulatory Fis family.</text>
</comment>